<name>EIF3I_DROER</name>
<feature type="chain" id="PRO_0000365343" description="Eukaryotic translation initiation factor 3 subunit I">
    <location>
        <begin position="1"/>
        <end position="326"/>
    </location>
</feature>
<feature type="repeat" description="WD 1">
    <location>
        <begin position="8"/>
        <end position="47"/>
    </location>
</feature>
<feature type="repeat" description="WD 2">
    <location>
        <begin position="50"/>
        <end position="89"/>
    </location>
</feature>
<feature type="repeat" description="WD 3">
    <location>
        <begin position="145"/>
        <end position="184"/>
    </location>
</feature>
<feature type="repeat" description="WD 4">
    <location>
        <begin position="188"/>
        <end position="227"/>
    </location>
</feature>
<feature type="repeat" description="WD 5">
    <location>
        <begin position="285"/>
        <end position="326"/>
    </location>
</feature>
<accession>B3N4C7</accession>
<proteinExistence type="inferred from homology"/>
<keyword id="KW-0963">Cytoplasm</keyword>
<keyword id="KW-0396">Initiation factor</keyword>
<keyword id="KW-0648">Protein biosynthesis</keyword>
<keyword id="KW-0677">Repeat</keyword>
<keyword id="KW-0853">WD repeat</keyword>
<sequence length="326" mass="36190">MRPLMLQGHERSITQIKYNREGDLLFSCSKDQKPNVWYSLNGERLGTYDGHQGAVWCLDVDWESRKLITGAGDMTTKIWDVEYGTVIASIPTKSSVRTSNFSFSGNQAAYSTDKAMGQSCELFLIDVRNADSSLSEQEPTLRIPMTESKITSMLWGPLDETIITGHDNGNIAIWDIRKGQKVVDSGTDHSAGINDMQLSKDGTMFVTASKDTTAKLFDSESLMCLKTYKTERPVNSAAISPIMDHVVLGGGQDAMEVTTTSTKAGKFDSRFFHLIYEEEFARLKGHFGPINSLAFHPDGKSYASGGEDGFVRVQTFDSTYFENIFE</sequence>
<reference key="1">
    <citation type="journal article" date="2007" name="Nature">
        <title>Evolution of genes and genomes on the Drosophila phylogeny.</title>
        <authorList>
            <consortium name="Drosophila 12 genomes consortium"/>
        </authorList>
    </citation>
    <scope>NUCLEOTIDE SEQUENCE [LARGE SCALE GENOMIC DNA]</scope>
    <source>
        <strain>Tucson 14021-0224.01</strain>
    </source>
</reference>
<gene>
    <name evidence="1" type="primary">eIF3i</name>
    <name evidence="1" type="synonym">eif3-S2</name>
    <name evidence="1" type="synonym">Trip1</name>
    <name type="ORF">GG24335</name>
</gene>
<evidence type="ECO:0000255" key="1">
    <source>
        <dbReference type="HAMAP-Rule" id="MF_03008"/>
    </source>
</evidence>
<protein>
    <recommendedName>
        <fullName evidence="1">Eukaryotic translation initiation factor 3 subunit I</fullName>
        <shortName evidence="1">eIF3i</shortName>
    </recommendedName>
    <alternativeName>
        <fullName evidence="1">Eukaryotic translation initiation factor 3 subunit 2</fullName>
    </alternativeName>
    <alternativeName>
        <fullName>TRIP-1 homolog</fullName>
    </alternativeName>
</protein>
<comment type="function">
    <text evidence="1">Component of the eukaryotic translation initiation factor 3 (eIF-3) complex, which is involved in protein synthesis of a specialized repertoire of mRNAs and, together with other initiation factors, stimulates binding of mRNA and methionyl-tRNAi to the 40S ribosome. The eIF-3 complex specifically targets and initiates translation of a subset of mRNAs involved in cell proliferation.</text>
</comment>
<comment type="subunit">
    <text evidence="1">Component of the eukaryotic translation initiation factor 3 (eIF-3) complex. The eIF-3 complex interacts with pix.</text>
</comment>
<comment type="subcellular location">
    <subcellularLocation>
        <location evidence="1">Cytoplasm</location>
    </subcellularLocation>
</comment>
<comment type="similarity">
    <text evidence="1">Belongs to the eIF-3 subunit I family.</text>
</comment>
<organism>
    <name type="scientific">Drosophila erecta</name>
    <name type="common">Fruit fly</name>
    <dbReference type="NCBI Taxonomy" id="7220"/>
    <lineage>
        <taxon>Eukaryota</taxon>
        <taxon>Metazoa</taxon>
        <taxon>Ecdysozoa</taxon>
        <taxon>Arthropoda</taxon>
        <taxon>Hexapoda</taxon>
        <taxon>Insecta</taxon>
        <taxon>Pterygota</taxon>
        <taxon>Neoptera</taxon>
        <taxon>Endopterygota</taxon>
        <taxon>Diptera</taxon>
        <taxon>Brachycera</taxon>
        <taxon>Muscomorpha</taxon>
        <taxon>Ephydroidea</taxon>
        <taxon>Drosophilidae</taxon>
        <taxon>Drosophila</taxon>
        <taxon>Sophophora</taxon>
    </lineage>
</organism>
<dbReference type="EMBL" id="CH954177">
    <property type="protein sequence ID" value="EDV57797.1"/>
    <property type="molecule type" value="Genomic_DNA"/>
</dbReference>
<dbReference type="SMR" id="B3N4C7"/>
<dbReference type="EnsemblMetazoa" id="FBtr0144389">
    <property type="protein sequence ID" value="FBpp0142881"/>
    <property type="gene ID" value="FBgn0116467"/>
</dbReference>
<dbReference type="EnsemblMetazoa" id="XM_001968702.3">
    <property type="protein sequence ID" value="XP_001968738.1"/>
    <property type="gene ID" value="LOC6540828"/>
</dbReference>
<dbReference type="GeneID" id="6540828"/>
<dbReference type="KEGG" id="der:6540828"/>
<dbReference type="CTD" id="8668"/>
<dbReference type="eggNOG" id="KOG0643">
    <property type="taxonomic scope" value="Eukaryota"/>
</dbReference>
<dbReference type="HOGENOM" id="CLU_043845_0_1_1"/>
<dbReference type="OMA" id="VWFSHNG"/>
<dbReference type="OrthoDB" id="24966at2759"/>
<dbReference type="PhylomeDB" id="B3N4C7"/>
<dbReference type="ChiTaRS" id="Trip1">
    <property type="organism name" value="fly"/>
</dbReference>
<dbReference type="Proteomes" id="UP000008711">
    <property type="component" value="Unassembled WGS sequence"/>
</dbReference>
<dbReference type="GO" id="GO:0016282">
    <property type="term" value="C:eukaryotic 43S preinitiation complex"/>
    <property type="evidence" value="ECO:0007669"/>
    <property type="project" value="UniProtKB-UniRule"/>
</dbReference>
<dbReference type="GO" id="GO:0033290">
    <property type="term" value="C:eukaryotic 48S preinitiation complex"/>
    <property type="evidence" value="ECO:0007669"/>
    <property type="project" value="UniProtKB-UniRule"/>
</dbReference>
<dbReference type="GO" id="GO:0071541">
    <property type="term" value="C:eukaryotic translation initiation factor 3 complex, eIF3m"/>
    <property type="evidence" value="ECO:0007669"/>
    <property type="project" value="TreeGrafter"/>
</dbReference>
<dbReference type="GO" id="GO:0003723">
    <property type="term" value="F:RNA binding"/>
    <property type="evidence" value="ECO:0007669"/>
    <property type="project" value="TreeGrafter"/>
</dbReference>
<dbReference type="GO" id="GO:0003743">
    <property type="term" value="F:translation initiation factor activity"/>
    <property type="evidence" value="ECO:0007669"/>
    <property type="project" value="UniProtKB-UniRule"/>
</dbReference>
<dbReference type="GO" id="GO:0001732">
    <property type="term" value="P:formation of cytoplasmic translation initiation complex"/>
    <property type="evidence" value="ECO:0007669"/>
    <property type="project" value="UniProtKB-UniRule"/>
</dbReference>
<dbReference type="FunFam" id="2.130.10.10:FF:000127">
    <property type="entry name" value="Eukaryotic translation initiation factor 3 subunit I"/>
    <property type="match status" value="1"/>
</dbReference>
<dbReference type="Gene3D" id="2.130.10.10">
    <property type="entry name" value="YVTN repeat-like/Quinoprotein amine dehydrogenase"/>
    <property type="match status" value="1"/>
</dbReference>
<dbReference type="HAMAP" id="MF_03008">
    <property type="entry name" value="eIF3i"/>
    <property type="match status" value="1"/>
</dbReference>
<dbReference type="InterPro" id="IPR027525">
    <property type="entry name" value="eIF3i"/>
</dbReference>
<dbReference type="InterPro" id="IPR015943">
    <property type="entry name" value="WD40/YVTN_repeat-like_dom_sf"/>
</dbReference>
<dbReference type="InterPro" id="IPR019775">
    <property type="entry name" value="WD40_repeat_CS"/>
</dbReference>
<dbReference type="InterPro" id="IPR036322">
    <property type="entry name" value="WD40_repeat_dom_sf"/>
</dbReference>
<dbReference type="InterPro" id="IPR001680">
    <property type="entry name" value="WD40_rpt"/>
</dbReference>
<dbReference type="PANTHER" id="PTHR19877">
    <property type="entry name" value="EUKARYOTIC TRANSLATION INITIATION FACTOR 3 SUBUNIT I"/>
    <property type="match status" value="1"/>
</dbReference>
<dbReference type="PANTHER" id="PTHR19877:SF1">
    <property type="entry name" value="EUKARYOTIC TRANSLATION INITIATION FACTOR 3 SUBUNIT I"/>
    <property type="match status" value="1"/>
</dbReference>
<dbReference type="Pfam" id="PF24805">
    <property type="entry name" value="EIF3I"/>
    <property type="match status" value="1"/>
</dbReference>
<dbReference type="SMART" id="SM00320">
    <property type="entry name" value="WD40"/>
    <property type="match status" value="6"/>
</dbReference>
<dbReference type="SUPFAM" id="SSF50978">
    <property type="entry name" value="WD40 repeat-like"/>
    <property type="match status" value="1"/>
</dbReference>
<dbReference type="PROSITE" id="PS00678">
    <property type="entry name" value="WD_REPEATS_1"/>
    <property type="match status" value="2"/>
</dbReference>
<dbReference type="PROSITE" id="PS50082">
    <property type="entry name" value="WD_REPEATS_2"/>
    <property type="match status" value="5"/>
</dbReference>
<dbReference type="PROSITE" id="PS50294">
    <property type="entry name" value="WD_REPEATS_REGION"/>
    <property type="match status" value="2"/>
</dbReference>